<protein>
    <recommendedName>
        <fullName>Uncharacterized protein F37A4.2</fullName>
    </recommendedName>
</protein>
<name>YPT2_CAEEL</name>
<organism>
    <name type="scientific">Caenorhabditis elegans</name>
    <dbReference type="NCBI Taxonomy" id="6239"/>
    <lineage>
        <taxon>Eukaryota</taxon>
        <taxon>Metazoa</taxon>
        <taxon>Ecdysozoa</taxon>
        <taxon>Nematoda</taxon>
        <taxon>Chromadorea</taxon>
        <taxon>Rhabditida</taxon>
        <taxon>Rhabditina</taxon>
        <taxon>Rhabditomorpha</taxon>
        <taxon>Rhabditoidea</taxon>
        <taxon>Rhabditidae</taxon>
        <taxon>Peloderinae</taxon>
        <taxon>Caenorhabditis</taxon>
    </lineage>
</organism>
<keyword id="KW-1185">Reference proteome</keyword>
<sequence length="189" mass="21602">MPRDDPITEEERRANSATDLIRMRLARLQQNIDKPAPIPIKKETLRAPKEPLEFVRNVVGSSAAAGSAEFHIYRNNRRKEQNRLDYIDAVAKKEELDDAYRHKVEKLEKEEESKTAKKRAKRLRQKAAAKKRKLTKKNNESDESSSDDSDSDSGSGSDNESEGKQNTEVEDKDKVEKEETDDEKTEVST</sequence>
<gene>
    <name type="ORF">F37A4.2</name>
</gene>
<accession>P41880</accession>
<reference key="1">
    <citation type="journal article" date="1998" name="Science">
        <title>Genome sequence of the nematode C. elegans: a platform for investigating biology.</title>
        <authorList>
            <consortium name="The C. elegans sequencing consortium"/>
        </authorList>
    </citation>
    <scope>NUCLEOTIDE SEQUENCE [LARGE SCALE GENOMIC DNA]</scope>
    <source>
        <strain>Bristol N2</strain>
    </source>
</reference>
<proteinExistence type="predicted"/>
<feature type="chain" id="PRO_0000065326" description="Uncharacterized protein F37A4.2">
    <location>
        <begin position="1"/>
        <end position="189"/>
    </location>
</feature>
<feature type="region of interest" description="Disordered" evidence="1">
    <location>
        <begin position="105"/>
        <end position="189"/>
    </location>
</feature>
<feature type="compositionally biased region" description="Basic and acidic residues" evidence="1">
    <location>
        <begin position="105"/>
        <end position="115"/>
    </location>
</feature>
<feature type="compositionally biased region" description="Basic residues" evidence="1">
    <location>
        <begin position="116"/>
        <end position="136"/>
    </location>
</feature>
<feature type="compositionally biased region" description="Acidic residues" evidence="1">
    <location>
        <begin position="141"/>
        <end position="151"/>
    </location>
</feature>
<feature type="compositionally biased region" description="Basic and acidic residues" evidence="1">
    <location>
        <begin position="161"/>
        <end position="177"/>
    </location>
</feature>
<feature type="compositionally biased region" description="Acidic residues" evidence="1">
    <location>
        <begin position="178"/>
        <end position="189"/>
    </location>
</feature>
<dbReference type="EMBL" id="FO081312">
    <property type="protein sequence ID" value="CCD70700.1"/>
    <property type="molecule type" value="Genomic_DNA"/>
</dbReference>
<dbReference type="PIR" id="S44639">
    <property type="entry name" value="S44639"/>
</dbReference>
<dbReference type="RefSeq" id="NP_498474.1">
    <property type="nucleotide sequence ID" value="NM_066073.8"/>
</dbReference>
<dbReference type="SMR" id="P41880"/>
<dbReference type="BioGRID" id="41163">
    <property type="interactions" value="1"/>
</dbReference>
<dbReference type="FunCoup" id="P41880">
    <property type="interactions" value="152"/>
</dbReference>
<dbReference type="STRING" id="6239.F37A4.2.1"/>
<dbReference type="PaxDb" id="6239-F37A4.2.2"/>
<dbReference type="PeptideAtlas" id="P41880"/>
<dbReference type="EnsemblMetazoa" id="F37A4.2.1">
    <property type="protein sequence ID" value="F37A4.2.1"/>
    <property type="gene ID" value="WBGene00018132"/>
</dbReference>
<dbReference type="GeneID" id="175947"/>
<dbReference type="KEGG" id="cel:CELE_F37A4.2"/>
<dbReference type="UCSC" id="F37A4.2.1">
    <property type="organism name" value="c. elegans"/>
</dbReference>
<dbReference type="AGR" id="WB:WBGene00018132"/>
<dbReference type="CTD" id="175947"/>
<dbReference type="WormBase" id="F37A4.2">
    <property type="protein sequence ID" value="CE00710"/>
    <property type="gene ID" value="WBGene00018132"/>
</dbReference>
<dbReference type="eggNOG" id="KOG4055">
    <property type="taxonomic scope" value="Eukaryota"/>
</dbReference>
<dbReference type="GeneTree" id="ENSGT00390000005003"/>
<dbReference type="HOGENOM" id="CLU_079129_2_2_1"/>
<dbReference type="InParanoid" id="P41880"/>
<dbReference type="OMA" id="MRINKLM"/>
<dbReference type="OrthoDB" id="10067079at2759"/>
<dbReference type="PhylomeDB" id="P41880"/>
<dbReference type="Reactome" id="R-CEL-72163">
    <property type="pathway name" value="mRNA Splicing - Major Pathway"/>
</dbReference>
<dbReference type="PRO" id="PR:P41880"/>
<dbReference type="Proteomes" id="UP000001940">
    <property type="component" value="Chromosome III"/>
</dbReference>
<dbReference type="Bgee" id="WBGene00018132">
    <property type="expression patterns" value="Expressed in germ line (C elegans) and 4 other cell types or tissues"/>
</dbReference>
<dbReference type="GO" id="GO:0005730">
    <property type="term" value="C:nucleolus"/>
    <property type="evidence" value="ECO:0000318"/>
    <property type="project" value="GO_Central"/>
</dbReference>
<dbReference type="GO" id="GO:0003725">
    <property type="term" value="F:double-stranded RNA binding"/>
    <property type="evidence" value="ECO:0000318"/>
    <property type="project" value="GO_Central"/>
</dbReference>
<dbReference type="GO" id="GO:0019901">
    <property type="term" value="F:protein kinase binding"/>
    <property type="evidence" value="ECO:0000318"/>
    <property type="project" value="GO_Central"/>
</dbReference>
<dbReference type="GO" id="GO:0004860">
    <property type="term" value="F:protein kinase inhibitor activity"/>
    <property type="evidence" value="ECO:0000318"/>
    <property type="project" value="GO_Central"/>
</dbReference>
<dbReference type="InterPro" id="IPR009548">
    <property type="entry name" value="Prkrip1"/>
</dbReference>
<dbReference type="PANTHER" id="PTHR13507">
    <property type="entry name" value="PRKR-INTERACTING PROTEIN 1"/>
    <property type="match status" value="1"/>
</dbReference>
<dbReference type="PANTHER" id="PTHR13507:SF0">
    <property type="entry name" value="PRKR-INTERACTING PROTEIN 1"/>
    <property type="match status" value="1"/>
</dbReference>
<dbReference type="Pfam" id="PF06658">
    <property type="entry name" value="DUF1168"/>
    <property type="match status" value="1"/>
</dbReference>
<evidence type="ECO:0000256" key="1">
    <source>
        <dbReference type="SAM" id="MobiDB-lite"/>
    </source>
</evidence>